<sequence>MNSVLNSGRTTICDAYNVAAHDPFSFQHKSLDTVQKEWTEWKKNNHSLYLDPIVGTVASFLLKKVGSLVGKRILSELRNLIFPSGSTNLMQDILRETEKFLNQRLNTDTLARVNAELTGLQANVEEFNRQVDNFLNPNRNAVPLSITSSVNTMQQLFLNRLPQFQMQGYQLLLLPLFAQAANLHLSFIRDVILNADEWGISAATLRTYRDYLKNYTRDYSNYCINTYQSAFKGLNTRLHDMLEFRTYMFLNVFEYVSIWSLFKYQSLLVSSGANLYASGSGPQQTQSFTSQDWPFLYSLFQVNSNYVLNGFSGARLSNTFPNIVGLPGSTTTHALLAARVNYSGGISSGDIGASPFNQNFNCSTFLPPLLTPFVRSWLDSGSDREGVATVTNWQTESFETTLGLRSGAFTARGNSNYFPDYFIRNISGVPLVVRNEDLRRPLHYNEIRNIASPSGTPGGARAYMVSVHNRKNNIHAVHENGSMIHLAPNDYTGFTISPIHATQVNNQTRTFISEKFGNQGDSLRFEQNNTTARYTLRGNGNSYNLYLRVSSIGNSTIRVTINGRVYTATNVNTTTNNDGVNDNGARFSDINIGNVVASSNSDVPLDINVTLNSGTQFDLMNIMLVPTNISPLY</sequence>
<accession>P21254</accession>
<organism>
    <name type="scientific">Bacillus thuringiensis subsp. kurstaki</name>
    <dbReference type="NCBI Taxonomy" id="29339"/>
    <lineage>
        <taxon>Bacteria</taxon>
        <taxon>Bacillati</taxon>
        <taxon>Bacillota</taxon>
        <taxon>Bacilli</taxon>
        <taxon>Bacillales</taxon>
        <taxon>Bacillaceae</taxon>
        <taxon>Bacillus</taxon>
        <taxon>Bacillus cereus group</taxon>
    </lineage>
</organism>
<feature type="chain" id="PRO_0000174057" description="Pesticidal crystal protein Cry2Ab">
    <location>
        <begin position="1"/>
        <end position="633"/>
    </location>
</feature>
<evidence type="ECO:0000269" key="1">
    <source>
    </source>
</evidence>
<evidence type="ECO:0000303" key="2">
    <source>
    </source>
</evidence>
<evidence type="ECO:0000305" key="3"/>
<gene>
    <name type="primary">cry2Ab</name>
    <name evidence="2" type="synonym">cryB2</name>
    <name type="synonym">cryIIA(b)</name>
</gene>
<protein>
    <recommendedName>
        <fullName>Pesticidal crystal protein Cry2Ab</fullName>
    </recommendedName>
    <alternativeName>
        <fullName>71 kDa crystal protein</fullName>
    </alternativeName>
    <alternativeName>
        <fullName>Crystaline entomocidal protoxin</fullName>
    </alternativeName>
    <alternativeName>
        <fullName>Insecticidal delta-endotoxin CryIIA(b)</fullName>
    </alternativeName>
</protein>
<reference key="1">
    <citation type="journal article" date="1989" name="J. Bacteriol.">
        <title>Two highly related insecticidal crystal proteins of Bacillus thuringiensis subsp. kurstaki possess different host range specificities.</title>
        <authorList>
            <person name="Widner W.R."/>
            <person name="Whiteley H.R."/>
        </authorList>
    </citation>
    <scope>NUCLEOTIDE SEQUENCE [GENOMIC DNA]</scope>
    <scope>INSECT TOXICITY</scope>
    <source>
        <strain>HD-1</strain>
    </source>
</reference>
<reference key="2">
    <citation type="journal article" date="1990" name="Mol. Microbiol.">
        <title>Activation of a cryptic crystal protein gene of Bacillus thuringiensis subspecies kurstaki by gene fusion and determination of the crystal protein insecticidal specificity.</title>
        <authorList>
            <person name="Dankocsik C.C."/>
            <person name="Donovan W.P."/>
            <person name="Jany C.S."/>
        </authorList>
    </citation>
    <scope>NUCLEOTIDE SEQUENCE [GENOMIC DNA]</scope>
</reference>
<reference key="3">
    <citation type="submission" date="1999-07" db="EMBL/GenBank/DDBJ databases">
        <title>Bacillus thuringiensis Btc002 cry2Ab gene.</title>
        <authorList>
            <person name="Chen Z.Y."/>
            <person name="Zhang J."/>
            <person name="Huang D.F."/>
        </authorList>
    </citation>
    <scope>NUCLEOTIDE SEQUENCE [GENOMIC DNA]</scope>
    <source>
        <strain>BTC002</strain>
    </source>
</reference>
<geneLocation type="plasmid">
    <name>unnamed</name>
</geneLocation>
<dbReference type="EMBL" id="M23724">
    <property type="protein sequence ID" value="AAA22342.1"/>
    <property type="molecule type" value="Genomic_DNA"/>
</dbReference>
<dbReference type="EMBL" id="X55416">
    <property type="protein sequence ID" value="CAA39075.1"/>
    <property type="molecule type" value="Genomic_DNA"/>
</dbReference>
<dbReference type="EMBL" id="AF164666">
    <property type="protein sequence ID" value="AAG36762.1"/>
    <property type="molecule type" value="Genomic_DNA"/>
</dbReference>
<dbReference type="PIR" id="D32053">
    <property type="entry name" value="D32053"/>
</dbReference>
<dbReference type="RefSeq" id="WP_001089638.1">
    <property type="nucleotide sequence ID" value="NZ_PGEH01000013.1"/>
</dbReference>
<dbReference type="SMR" id="P21254"/>
<dbReference type="TCDB" id="1.C.2.2.2">
    <property type="family name" value="the channel-forming Delta-endotoxin insecticidal crystal protein (icp) family"/>
</dbReference>
<dbReference type="GO" id="GO:0005102">
    <property type="term" value="F:signaling receptor binding"/>
    <property type="evidence" value="ECO:0007669"/>
    <property type="project" value="InterPro"/>
</dbReference>
<dbReference type="GO" id="GO:0090729">
    <property type="term" value="F:toxin activity"/>
    <property type="evidence" value="ECO:0007669"/>
    <property type="project" value="UniProtKB-KW"/>
</dbReference>
<dbReference type="GO" id="GO:0030435">
    <property type="term" value="P:sporulation resulting in formation of a cellular spore"/>
    <property type="evidence" value="ECO:0007669"/>
    <property type="project" value="UniProtKB-KW"/>
</dbReference>
<dbReference type="GO" id="GO:0001907">
    <property type="term" value="P:symbiont-mediated killing of host cell"/>
    <property type="evidence" value="ECO:0007669"/>
    <property type="project" value="InterPro"/>
</dbReference>
<dbReference type="Gene3D" id="2.60.120.260">
    <property type="entry name" value="Galactose-binding domain-like"/>
    <property type="match status" value="1"/>
</dbReference>
<dbReference type="Gene3D" id="2.100.10.10">
    <property type="entry name" value="Pesticidal crystal protein, central domain"/>
    <property type="match status" value="1"/>
</dbReference>
<dbReference type="Gene3D" id="1.20.190.10">
    <property type="entry name" value="Pesticidal crystal protein, N-terminal domain"/>
    <property type="match status" value="1"/>
</dbReference>
<dbReference type="InterPro" id="IPR008979">
    <property type="entry name" value="Galactose-bd-like_sf"/>
</dbReference>
<dbReference type="InterPro" id="IPR038979">
    <property type="entry name" value="Pest_crys"/>
</dbReference>
<dbReference type="InterPro" id="IPR005638">
    <property type="entry name" value="Pest_crys_dom-III"/>
</dbReference>
<dbReference type="InterPro" id="IPR005639">
    <property type="entry name" value="Pest_crys_dom_I"/>
</dbReference>
<dbReference type="InterPro" id="IPR036716">
    <property type="entry name" value="Pest_crys_N_sf"/>
</dbReference>
<dbReference type="InterPro" id="IPR015214">
    <property type="entry name" value="Pest_cryst_cen_dom_Cry2A/18"/>
</dbReference>
<dbReference type="InterPro" id="IPR036399">
    <property type="entry name" value="Pest_cryst_cen_dom_sf"/>
</dbReference>
<dbReference type="PANTHER" id="PTHR37003">
    <property type="entry name" value="ENDOTOXIN_N DOMAIN-CONTAINING PROTEIN-RELATED"/>
    <property type="match status" value="1"/>
</dbReference>
<dbReference type="PANTHER" id="PTHR37003:SF2">
    <property type="entry name" value="PESTICIDAL CRYSTAL PROTEIN N-TERMINAL DOMAIN-CONTAINING PROTEIN"/>
    <property type="match status" value="1"/>
</dbReference>
<dbReference type="Pfam" id="PF03944">
    <property type="entry name" value="Endotoxin_C"/>
    <property type="match status" value="1"/>
</dbReference>
<dbReference type="Pfam" id="PF09131">
    <property type="entry name" value="Endotoxin_mid"/>
    <property type="match status" value="1"/>
</dbReference>
<dbReference type="Pfam" id="PF03945">
    <property type="entry name" value="Endotoxin_N"/>
    <property type="match status" value="1"/>
</dbReference>
<dbReference type="SUPFAM" id="SSF51096">
    <property type="entry name" value="delta-Endotoxin (insectocide), middle domain"/>
    <property type="match status" value="1"/>
</dbReference>
<dbReference type="SUPFAM" id="SSF56849">
    <property type="entry name" value="delta-Endotoxin (insectocide), N-terminal domain"/>
    <property type="match status" value="1"/>
</dbReference>
<dbReference type="SUPFAM" id="SSF49785">
    <property type="entry name" value="Galactose-binding domain-like"/>
    <property type="match status" value="1"/>
</dbReference>
<comment type="function">
    <text evidence="1">Promotes colloidosmotic lysis by binding to the midgut epithelial cells of lepidopteran (Manduca sexta) larvae.</text>
</comment>
<comment type="developmental stage">
    <text>The crystal protein is produced during sporulation and is accumulated both as an inclusion and as part of the spore coat.</text>
</comment>
<comment type="miscellaneous">
    <text>Toxic segment of the protein is located in the N-terminus.</text>
</comment>
<comment type="miscellaneous">
    <text evidence="1">Encoded on an unnamed 225 kb plasmid.</text>
</comment>
<comment type="similarity">
    <text evidence="3">Belongs to the delta endotoxin family.</text>
</comment>
<proteinExistence type="evidence at transcript level"/>
<keyword id="KW-0614">Plasmid</keyword>
<keyword id="KW-0749">Sporulation</keyword>
<keyword id="KW-0800">Toxin</keyword>
<keyword id="KW-0843">Virulence</keyword>
<name>CR2AB_BACTK</name>